<keyword id="KW-1185">Reference proteome</keyword>
<name>YCDC_BACSU</name>
<proteinExistence type="predicted"/>
<sequence>MVNKQLKKKAQEIGNVPTHYELEIEDYDQKQKKYGQAYFIWKDPKDPEKHITVELRNDGALLTFSTTVHSETDKKLPDAELKLTALQFAAANHPGTFMNFHFQGKEERGQHIRFVYTKMELGLPIPNSGFLIDMTRSGQIVHFLYYGEGHKAEVPTEFVAKEKVVSHYLNTMSFELMYDVIDGEQEPRLVYEPILPGYSYPADVDEIVPDQHIADERIENTAPLPPLQNKEEVDIFALLGFTSDMQKVSERDFGEQIGSTWRRGAAPERKDLSIGSYFETRNKNTIKMKTDKRTGKLKAALSFMDWRNNLQCSTEECQEIALQFLYALYPRAAEFFRVNPVRIDERGRVRNHFSVWYKGVPLRFGAARIIVNPETGLIDAFMAPDIEPEQLEAINHRPDVSAEEAKEAFLAAFDVKLEWQPDFTAGSDQHCKLVYKPVYPSYIDAHIRKKKRL</sequence>
<reference key="1">
    <citation type="journal article" date="1997" name="Microbiology">
        <title>A 32 kb nucleotide sequence from the region of the lincomycin-resistance gene (22 degrees-25 degrees) of the Bacillus subtilis chromosome and identification of the site of the lin-2 mutation.</title>
        <authorList>
            <person name="Kumano M."/>
            <person name="Tamakoshi A."/>
            <person name="Yamane K."/>
        </authorList>
    </citation>
    <scope>NUCLEOTIDE SEQUENCE [GENOMIC DNA]</scope>
    <source>
        <strain>168</strain>
    </source>
</reference>
<reference key="2">
    <citation type="journal article" date="1997" name="Nature">
        <title>The complete genome sequence of the Gram-positive bacterium Bacillus subtilis.</title>
        <authorList>
            <person name="Kunst F."/>
            <person name="Ogasawara N."/>
            <person name="Moszer I."/>
            <person name="Albertini A.M."/>
            <person name="Alloni G."/>
            <person name="Azevedo V."/>
            <person name="Bertero M.G."/>
            <person name="Bessieres P."/>
            <person name="Bolotin A."/>
            <person name="Borchert S."/>
            <person name="Borriss R."/>
            <person name="Boursier L."/>
            <person name="Brans A."/>
            <person name="Braun M."/>
            <person name="Brignell S.C."/>
            <person name="Bron S."/>
            <person name="Brouillet S."/>
            <person name="Bruschi C.V."/>
            <person name="Caldwell B."/>
            <person name="Capuano V."/>
            <person name="Carter N.M."/>
            <person name="Choi S.-K."/>
            <person name="Codani J.-J."/>
            <person name="Connerton I.F."/>
            <person name="Cummings N.J."/>
            <person name="Daniel R.A."/>
            <person name="Denizot F."/>
            <person name="Devine K.M."/>
            <person name="Duesterhoeft A."/>
            <person name="Ehrlich S.D."/>
            <person name="Emmerson P.T."/>
            <person name="Entian K.-D."/>
            <person name="Errington J."/>
            <person name="Fabret C."/>
            <person name="Ferrari E."/>
            <person name="Foulger D."/>
            <person name="Fritz C."/>
            <person name="Fujita M."/>
            <person name="Fujita Y."/>
            <person name="Fuma S."/>
            <person name="Galizzi A."/>
            <person name="Galleron N."/>
            <person name="Ghim S.-Y."/>
            <person name="Glaser P."/>
            <person name="Goffeau A."/>
            <person name="Golightly E.J."/>
            <person name="Grandi G."/>
            <person name="Guiseppi G."/>
            <person name="Guy B.J."/>
            <person name="Haga K."/>
            <person name="Haiech J."/>
            <person name="Harwood C.R."/>
            <person name="Henaut A."/>
            <person name="Hilbert H."/>
            <person name="Holsappel S."/>
            <person name="Hosono S."/>
            <person name="Hullo M.-F."/>
            <person name="Itaya M."/>
            <person name="Jones L.-M."/>
            <person name="Joris B."/>
            <person name="Karamata D."/>
            <person name="Kasahara Y."/>
            <person name="Klaerr-Blanchard M."/>
            <person name="Klein C."/>
            <person name="Kobayashi Y."/>
            <person name="Koetter P."/>
            <person name="Koningstein G."/>
            <person name="Krogh S."/>
            <person name="Kumano M."/>
            <person name="Kurita K."/>
            <person name="Lapidus A."/>
            <person name="Lardinois S."/>
            <person name="Lauber J."/>
            <person name="Lazarevic V."/>
            <person name="Lee S.-M."/>
            <person name="Levine A."/>
            <person name="Liu H."/>
            <person name="Masuda S."/>
            <person name="Mauel C."/>
            <person name="Medigue C."/>
            <person name="Medina N."/>
            <person name="Mellado R.P."/>
            <person name="Mizuno M."/>
            <person name="Moestl D."/>
            <person name="Nakai S."/>
            <person name="Noback M."/>
            <person name="Noone D."/>
            <person name="O'Reilly M."/>
            <person name="Ogawa K."/>
            <person name="Ogiwara A."/>
            <person name="Oudega B."/>
            <person name="Park S.-H."/>
            <person name="Parro V."/>
            <person name="Pohl T.M."/>
            <person name="Portetelle D."/>
            <person name="Porwollik S."/>
            <person name="Prescott A.M."/>
            <person name="Presecan E."/>
            <person name="Pujic P."/>
            <person name="Purnelle B."/>
            <person name="Rapoport G."/>
            <person name="Rey M."/>
            <person name="Reynolds S."/>
            <person name="Rieger M."/>
            <person name="Rivolta C."/>
            <person name="Rocha E."/>
            <person name="Roche B."/>
            <person name="Rose M."/>
            <person name="Sadaie Y."/>
            <person name="Sato T."/>
            <person name="Scanlan E."/>
            <person name="Schleich S."/>
            <person name="Schroeter R."/>
            <person name="Scoffone F."/>
            <person name="Sekiguchi J."/>
            <person name="Sekowska A."/>
            <person name="Seror S.J."/>
            <person name="Serror P."/>
            <person name="Shin B.-S."/>
            <person name="Soldo B."/>
            <person name="Sorokin A."/>
            <person name="Tacconi E."/>
            <person name="Takagi T."/>
            <person name="Takahashi H."/>
            <person name="Takemaru K."/>
            <person name="Takeuchi M."/>
            <person name="Tamakoshi A."/>
            <person name="Tanaka T."/>
            <person name="Terpstra P."/>
            <person name="Tognoni A."/>
            <person name="Tosato V."/>
            <person name="Uchiyama S."/>
            <person name="Vandenbol M."/>
            <person name="Vannier F."/>
            <person name="Vassarotti A."/>
            <person name="Viari A."/>
            <person name="Wambutt R."/>
            <person name="Wedler E."/>
            <person name="Wedler H."/>
            <person name="Weitzenegger T."/>
            <person name="Winters P."/>
            <person name="Wipat A."/>
            <person name="Yamamoto H."/>
            <person name="Yamane K."/>
            <person name="Yasumoto K."/>
            <person name="Yata K."/>
            <person name="Yoshida K."/>
            <person name="Yoshikawa H.-F."/>
            <person name="Zumstein E."/>
            <person name="Yoshikawa H."/>
            <person name="Danchin A."/>
        </authorList>
    </citation>
    <scope>NUCLEOTIDE SEQUENCE [LARGE SCALE GENOMIC DNA]</scope>
    <source>
        <strain>168</strain>
    </source>
</reference>
<gene>
    <name type="primary">ycdC</name>
    <name type="ordered locus">BSU02800</name>
</gene>
<comment type="similarity">
    <text evidence="1">To B.subtilis YcdB.</text>
</comment>
<feature type="chain" id="PRO_0000049473" description="Uncharacterized protein YcdC">
    <location>
        <begin position="1"/>
        <end position="453"/>
    </location>
</feature>
<protein>
    <recommendedName>
        <fullName>Uncharacterized protein YcdC</fullName>
    </recommendedName>
</protein>
<dbReference type="EMBL" id="AB000617">
    <property type="protein sequence ID" value="BAA22241.1"/>
    <property type="molecule type" value="Genomic_DNA"/>
</dbReference>
<dbReference type="EMBL" id="AL009126">
    <property type="protein sequence ID" value="CAB12074.1"/>
    <property type="molecule type" value="Genomic_DNA"/>
</dbReference>
<dbReference type="PIR" id="E69755">
    <property type="entry name" value="E69755"/>
</dbReference>
<dbReference type="RefSeq" id="NP_388162.1">
    <property type="nucleotide sequence ID" value="NC_000964.3"/>
</dbReference>
<dbReference type="RefSeq" id="WP_010886397.1">
    <property type="nucleotide sequence ID" value="NZ_OZ025638.1"/>
</dbReference>
<dbReference type="SMR" id="O34772"/>
<dbReference type="FunCoup" id="O34772">
    <property type="interactions" value="67"/>
</dbReference>
<dbReference type="PaxDb" id="224308-BSU02800"/>
<dbReference type="EnsemblBacteria" id="CAB12074">
    <property type="protein sequence ID" value="CAB12074"/>
    <property type="gene ID" value="BSU_02800"/>
</dbReference>
<dbReference type="GeneID" id="938376"/>
<dbReference type="KEGG" id="bsu:BSU02800"/>
<dbReference type="PATRIC" id="fig|224308.179.peg.291"/>
<dbReference type="eggNOG" id="COG1595">
    <property type="taxonomic scope" value="Bacteria"/>
</dbReference>
<dbReference type="InParanoid" id="O34772"/>
<dbReference type="OrthoDB" id="2821454at2"/>
<dbReference type="BioCyc" id="BSUB:BSU02800-MONOMER"/>
<dbReference type="Proteomes" id="UP000001570">
    <property type="component" value="Chromosome"/>
</dbReference>
<dbReference type="InterPro" id="IPR032599">
    <property type="entry name" value="YcdB/YcdC_rep_domain"/>
</dbReference>
<dbReference type="Pfam" id="PF16244">
    <property type="entry name" value="DUF4901"/>
    <property type="match status" value="2"/>
</dbReference>
<accession>O34772</accession>
<organism>
    <name type="scientific">Bacillus subtilis (strain 168)</name>
    <dbReference type="NCBI Taxonomy" id="224308"/>
    <lineage>
        <taxon>Bacteria</taxon>
        <taxon>Bacillati</taxon>
        <taxon>Bacillota</taxon>
        <taxon>Bacilli</taxon>
        <taxon>Bacillales</taxon>
        <taxon>Bacillaceae</taxon>
        <taxon>Bacillus</taxon>
    </lineage>
</organism>
<evidence type="ECO:0000305" key="1"/>